<sequence length="257" mass="28728">MPGFTCCVPGCYNNSHRDRDLRFYTFPKDPTQREIWLKNISRAGVSGCFSTFQPTTGHRVCSVHFPGGRKTYTIRVPTLFPLRGVNERRSRRGRSRKVSAVVPIITSVVSTANETAPLEEDEEEGDIENTTVVQIGQNGQYIAPVDLTSSGDGSCITAVVSGGEESAVHESCSVADFALCGADHSYSLTTGTTSTELLRKLNEQRDIIALMEIKMKEMKNTIRQLRVTEARLQDELRQREQERERLICANTIIKRKL</sequence>
<name>THA11_DANRE</name>
<evidence type="ECO:0000250" key="1">
    <source>
        <dbReference type="UniProtKB" id="Q96EK4"/>
    </source>
</evidence>
<evidence type="ECO:0000255" key="2"/>
<evidence type="ECO:0000255" key="3">
    <source>
        <dbReference type="PROSITE-ProRule" id="PRU00309"/>
    </source>
</evidence>
<evidence type="ECO:0000269" key="4">
    <source>
    </source>
</evidence>
<evidence type="ECO:0000303" key="5">
    <source>
    </source>
</evidence>
<evidence type="ECO:0000305" key="6"/>
<gene>
    <name type="primary">thap11</name>
    <name type="ORF">zgc:65871</name>
</gene>
<comment type="function">
    <text evidence="1 4">Transcription factor, which has both transcriptional activation and repression activities. Binds numerous promoters of genes and therefore can be involved in many processes (By similarity). Also modulates chromatin accessibility (By similarity). Required for normal brain development and neural precursor differentiation (PubMed:28449119).</text>
</comment>
<comment type="subcellular location">
    <subcellularLocation>
        <location evidence="1">Nucleus</location>
    </subcellularLocation>
    <subcellularLocation>
        <location evidence="1">Cytoplasm</location>
    </subcellularLocation>
</comment>
<comment type="alternative products">
    <event type="alternative splicing"/>
    <isoform>
        <id>Q6TGZ4-1</id>
        <name>1</name>
        <sequence type="displayed"/>
    </isoform>
    <isoform>
        <id>Q6TGZ4-2</id>
        <name>2</name>
        <sequence type="described" ref="VSP_035879"/>
    </isoform>
</comment>
<comment type="disruption phenotype">
    <text evidence="4">Morpholino knockdown of the protein results in severe craniofacial abnormalities. At 4 days post fertilization (dpf), morphant embryos do not develop the major components of the viscerocranium, including Meckel's cartilage, the ceratohyal and the ceratobranchial cartilages. At 2 dpf, knockdown animals also show structural brain abnormalities.</text>
</comment>
<comment type="similarity">
    <text evidence="6">Belongs to the THAP11 family.</text>
</comment>
<dbReference type="EMBL" id="AY398362">
    <property type="protein sequence ID" value="AAQ97795.1"/>
    <property type="molecule type" value="mRNA"/>
</dbReference>
<dbReference type="EMBL" id="BC056572">
    <property type="protein sequence ID" value="AAH56572.1"/>
    <property type="molecule type" value="mRNA"/>
</dbReference>
<dbReference type="EMBL" id="BC066471">
    <property type="protein sequence ID" value="AAH66471.1"/>
    <property type="molecule type" value="mRNA"/>
</dbReference>
<dbReference type="RefSeq" id="NP_998267.1">
    <molecule id="Q6TGZ4-1"/>
    <property type="nucleotide sequence ID" value="NM_213102.1"/>
</dbReference>
<dbReference type="SMR" id="Q6TGZ4"/>
<dbReference type="FunCoup" id="Q6TGZ4">
    <property type="interactions" value="1580"/>
</dbReference>
<dbReference type="STRING" id="7955.ENSDARP00000052341"/>
<dbReference type="PaxDb" id="7955-ENSDARP00000052341"/>
<dbReference type="Ensembl" id="ENSDART00000052342">
    <molecule id="Q6TGZ4-1"/>
    <property type="protein sequence ID" value="ENSDARP00000052341"/>
    <property type="gene ID" value="ENSDARG00000036055"/>
</dbReference>
<dbReference type="GeneID" id="406390"/>
<dbReference type="KEGG" id="dre:406390"/>
<dbReference type="AGR" id="ZFIN:ZDB-GENE-040426-2121"/>
<dbReference type="CTD" id="57215"/>
<dbReference type="ZFIN" id="ZDB-GENE-040426-2121">
    <property type="gene designation" value="thap11"/>
</dbReference>
<dbReference type="eggNOG" id="ENOG502QQ1Z">
    <property type="taxonomic scope" value="Eukaryota"/>
</dbReference>
<dbReference type="HOGENOM" id="CLU_090879_1_0_1"/>
<dbReference type="InParanoid" id="Q6TGZ4"/>
<dbReference type="OMA" id="GHRVCSI"/>
<dbReference type="OrthoDB" id="8948150at2759"/>
<dbReference type="PhylomeDB" id="Q6TGZ4"/>
<dbReference type="TreeFam" id="TF331359"/>
<dbReference type="PRO" id="PR:Q6TGZ4"/>
<dbReference type="Proteomes" id="UP000000437">
    <property type="component" value="Chromosome 7"/>
</dbReference>
<dbReference type="Bgee" id="ENSDARG00000036055">
    <property type="expression patterns" value="Expressed in ovary and 28 other cell types or tissues"/>
</dbReference>
<dbReference type="GO" id="GO:0005737">
    <property type="term" value="C:cytoplasm"/>
    <property type="evidence" value="ECO:0007669"/>
    <property type="project" value="UniProtKB-SubCell"/>
</dbReference>
<dbReference type="GO" id="GO:0005654">
    <property type="term" value="C:nucleoplasm"/>
    <property type="evidence" value="ECO:0000318"/>
    <property type="project" value="GO_Central"/>
</dbReference>
<dbReference type="GO" id="GO:0003677">
    <property type="term" value="F:DNA binding"/>
    <property type="evidence" value="ECO:0000250"/>
    <property type="project" value="UniProtKB"/>
</dbReference>
<dbReference type="GO" id="GO:0000978">
    <property type="term" value="F:RNA polymerase II cis-regulatory region sequence-specific DNA binding"/>
    <property type="evidence" value="ECO:0000318"/>
    <property type="project" value="GO_Central"/>
</dbReference>
<dbReference type="GO" id="GO:0008270">
    <property type="term" value="F:zinc ion binding"/>
    <property type="evidence" value="ECO:0000250"/>
    <property type="project" value="UniProtKB"/>
</dbReference>
<dbReference type="GO" id="GO:0006357">
    <property type="term" value="P:regulation of transcription by RNA polymerase II"/>
    <property type="evidence" value="ECO:0000318"/>
    <property type="project" value="GO_Central"/>
</dbReference>
<dbReference type="CDD" id="cd22291">
    <property type="entry name" value="cc_THAP11_C"/>
    <property type="match status" value="1"/>
</dbReference>
<dbReference type="InterPro" id="IPR006612">
    <property type="entry name" value="THAP_Znf"/>
</dbReference>
<dbReference type="PANTHER" id="PTHR22794">
    <property type="entry name" value="THAP DOMAIN PROTEIN 11"/>
    <property type="match status" value="1"/>
</dbReference>
<dbReference type="PANTHER" id="PTHR22794:SF2">
    <property type="entry name" value="THAP DOMAIN-CONTAINING PROTEIN 11"/>
    <property type="match status" value="1"/>
</dbReference>
<dbReference type="Pfam" id="PF05485">
    <property type="entry name" value="THAP"/>
    <property type="match status" value="1"/>
</dbReference>
<dbReference type="SMART" id="SM00692">
    <property type="entry name" value="DM3"/>
    <property type="match status" value="1"/>
</dbReference>
<dbReference type="SMART" id="SM00980">
    <property type="entry name" value="THAP"/>
    <property type="match status" value="1"/>
</dbReference>
<dbReference type="SUPFAM" id="SSF57716">
    <property type="entry name" value="Glucocorticoid receptor-like (DNA-binding domain)"/>
    <property type="match status" value="1"/>
</dbReference>
<dbReference type="PROSITE" id="PS50950">
    <property type="entry name" value="ZF_THAP"/>
    <property type="match status" value="1"/>
</dbReference>
<feature type="chain" id="PRO_0000355149" description="THAP domain-containing protein 11">
    <location>
        <begin position="1"/>
        <end position="257"/>
    </location>
</feature>
<feature type="zinc finger region" description="THAP-type" evidence="3">
    <location>
        <begin position="6"/>
        <end position="64"/>
    </location>
</feature>
<feature type="coiled-coil region" evidence="2">
    <location>
        <begin position="196"/>
        <end position="251"/>
    </location>
</feature>
<feature type="splice variant" id="VSP_035879" description="In isoform 2." evidence="5">
    <location>
        <begin position="134"/>
        <end position="136"/>
    </location>
</feature>
<reference key="1">
    <citation type="journal article" date="2004" name="Proc. Natl. Acad. Sci. U.S.A.">
        <title>Hematopoietic gene expression profile in zebrafish kidney marrow.</title>
        <authorList>
            <person name="Song H.-D."/>
            <person name="Sun X.-J."/>
            <person name="Deng M."/>
            <person name="Zhang G.-W."/>
            <person name="Zhou Y."/>
            <person name="Wu X.-Y."/>
            <person name="Sheng Y."/>
            <person name="Chen Y."/>
            <person name="Ruan Z."/>
            <person name="Jiang C.-L."/>
            <person name="Fan H.-Y."/>
            <person name="Zon L.I."/>
            <person name="Kanki J.P."/>
            <person name="Liu T.X."/>
            <person name="Look A.T."/>
            <person name="Chen Z."/>
        </authorList>
    </citation>
    <scope>NUCLEOTIDE SEQUENCE [LARGE SCALE MRNA] (ISOFORM 2)</scope>
    <source>
        <tissue>Kidney marrow</tissue>
    </source>
</reference>
<reference key="2">
    <citation type="submission" date="2004-02" db="EMBL/GenBank/DDBJ databases">
        <authorList>
            <consortium name="NIH - Zebrafish Gene Collection (ZGC) project"/>
        </authorList>
    </citation>
    <scope>NUCLEOTIDE SEQUENCE [LARGE SCALE MRNA] (ISOFORM 1)</scope>
    <source>
        <tissue>Embryo</tissue>
    </source>
</reference>
<reference key="3">
    <citation type="journal article" date="2017" name="Hum. Mol. Genet.">
        <title>Mutations in THAP11 cause an inborn error of cobalamin metabolism and developmental abnormalities.</title>
        <authorList>
            <person name="Quintana A.M."/>
            <person name="Yu H.C."/>
            <person name="Brebner A."/>
            <person name="Pupavac M."/>
            <person name="Geiger E.A."/>
            <person name="Watson A."/>
            <person name="Castro V.L."/>
            <person name="Cheung W."/>
            <person name="Chen S.H."/>
            <person name="Watkins D."/>
            <person name="Pastinen T."/>
            <person name="Skovby F."/>
            <person name="Appel B."/>
            <person name="Rosenblatt D.S."/>
            <person name="Shaikh T.H."/>
        </authorList>
    </citation>
    <scope>DISRUPTION PHENOTYPE</scope>
</reference>
<proteinExistence type="evidence at transcript level"/>
<organism>
    <name type="scientific">Danio rerio</name>
    <name type="common">Zebrafish</name>
    <name type="synonym">Brachydanio rerio</name>
    <dbReference type="NCBI Taxonomy" id="7955"/>
    <lineage>
        <taxon>Eukaryota</taxon>
        <taxon>Metazoa</taxon>
        <taxon>Chordata</taxon>
        <taxon>Craniata</taxon>
        <taxon>Vertebrata</taxon>
        <taxon>Euteleostomi</taxon>
        <taxon>Actinopterygii</taxon>
        <taxon>Neopterygii</taxon>
        <taxon>Teleostei</taxon>
        <taxon>Ostariophysi</taxon>
        <taxon>Cypriniformes</taxon>
        <taxon>Danionidae</taxon>
        <taxon>Danioninae</taxon>
        <taxon>Danio</taxon>
    </lineage>
</organism>
<accession>Q6TGZ4</accession>
<accession>Q6NYT2</accession>
<keyword id="KW-0010">Activator</keyword>
<keyword id="KW-0025">Alternative splicing</keyword>
<keyword id="KW-0175">Coiled coil</keyword>
<keyword id="KW-0963">Cytoplasm</keyword>
<keyword id="KW-0238">DNA-binding</keyword>
<keyword id="KW-0479">Metal-binding</keyword>
<keyword id="KW-0539">Nucleus</keyword>
<keyword id="KW-1185">Reference proteome</keyword>
<keyword id="KW-0678">Repressor</keyword>
<keyword id="KW-0804">Transcription</keyword>
<keyword id="KW-0805">Transcription regulation</keyword>
<keyword id="KW-0862">Zinc</keyword>
<keyword id="KW-0863">Zinc-finger</keyword>
<protein>
    <recommendedName>
        <fullName>THAP domain-containing protein 11</fullName>
    </recommendedName>
</protein>